<reference key="1">
    <citation type="journal article" date="2008" name="PLoS ONE">
        <title>Genome sequence of the saprophyte Leptospira biflexa provides insights into the evolution of Leptospira and the pathogenesis of leptospirosis.</title>
        <authorList>
            <person name="Picardeau M."/>
            <person name="Bulach D.M."/>
            <person name="Bouchier C."/>
            <person name="Zuerner R.L."/>
            <person name="Zidane N."/>
            <person name="Wilson P.J."/>
            <person name="Creno S."/>
            <person name="Kuczek E.S."/>
            <person name="Bommezzadri S."/>
            <person name="Davis J.C."/>
            <person name="McGrath A."/>
            <person name="Johnson M.J."/>
            <person name="Boursaux-Eude C."/>
            <person name="Seemann T."/>
            <person name="Rouy Z."/>
            <person name="Coppel R.L."/>
            <person name="Rood J.I."/>
            <person name="Lajus A."/>
            <person name="Davies J.K."/>
            <person name="Medigue C."/>
            <person name="Adler B."/>
        </authorList>
    </citation>
    <scope>NUCLEOTIDE SEQUENCE [LARGE SCALE GENOMIC DNA]</scope>
    <source>
        <strain>Patoc 1 / ATCC 23582 / Paris</strain>
    </source>
</reference>
<feature type="chain" id="PRO_1000190336" description="RNA-binding protein Hfq">
    <location>
        <begin position="1"/>
        <end position="83"/>
    </location>
</feature>
<feature type="domain" description="Sm" evidence="2">
    <location>
        <begin position="9"/>
        <end position="69"/>
    </location>
</feature>
<organism>
    <name type="scientific">Leptospira biflexa serovar Patoc (strain Patoc 1 / ATCC 23582 / Paris)</name>
    <dbReference type="NCBI Taxonomy" id="456481"/>
    <lineage>
        <taxon>Bacteria</taxon>
        <taxon>Pseudomonadati</taxon>
        <taxon>Spirochaetota</taxon>
        <taxon>Spirochaetia</taxon>
        <taxon>Leptospirales</taxon>
        <taxon>Leptospiraceae</taxon>
        <taxon>Leptospira</taxon>
    </lineage>
</organism>
<accession>B0SJ28</accession>
<evidence type="ECO:0000255" key="1">
    <source>
        <dbReference type="HAMAP-Rule" id="MF_00436"/>
    </source>
</evidence>
<evidence type="ECO:0000255" key="2">
    <source>
        <dbReference type="PROSITE-ProRule" id="PRU01346"/>
    </source>
</evidence>
<comment type="function">
    <text evidence="1">RNA chaperone that binds small regulatory RNA (sRNAs) and mRNAs to facilitate mRNA translational regulation in response to envelope stress, environmental stress and changes in metabolite concentrations. Also binds with high specificity to tRNAs.</text>
</comment>
<comment type="subunit">
    <text evidence="1">Homohexamer.</text>
</comment>
<comment type="similarity">
    <text evidence="1">Belongs to the Hfq family.</text>
</comment>
<proteinExistence type="inferred from homology"/>
<protein>
    <recommendedName>
        <fullName evidence="1">RNA-binding protein Hfq</fullName>
    </recommendedName>
</protein>
<gene>
    <name evidence="1" type="primary">hfq</name>
    <name type="ordered locus">LEPBI_I0479</name>
</gene>
<keyword id="KW-1185">Reference proteome</keyword>
<keyword id="KW-0694">RNA-binding</keyword>
<keyword id="KW-0346">Stress response</keyword>
<sequence>MSAKNNIQDQLLNTARKEKIDLTIYLLNGVPLKGKVVSFDNFTIILENENKQNLVYKHAISTIIPAKPIKLHSEETPKEAGGV</sequence>
<name>HFQ_LEPBP</name>
<dbReference type="EMBL" id="CP000786">
    <property type="protein sequence ID" value="ABZ96617.1"/>
    <property type="molecule type" value="Genomic_DNA"/>
</dbReference>
<dbReference type="RefSeq" id="WP_012387504.1">
    <property type="nucleotide sequence ID" value="NC_010602.1"/>
</dbReference>
<dbReference type="SMR" id="B0SJ28"/>
<dbReference type="STRING" id="456481.LEPBI_I0479"/>
<dbReference type="KEGG" id="lbi:LEPBI_I0479"/>
<dbReference type="HOGENOM" id="CLU_113688_0_2_12"/>
<dbReference type="OrthoDB" id="9799751at2"/>
<dbReference type="BioCyc" id="LBIF456481:LEPBI_RS02345-MONOMER"/>
<dbReference type="Proteomes" id="UP000001847">
    <property type="component" value="Chromosome I"/>
</dbReference>
<dbReference type="GO" id="GO:0005829">
    <property type="term" value="C:cytosol"/>
    <property type="evidence" value="ECO:0007669"/>
    <property type="project" value="TreeGrafter"/>
</dbReference>
<dbReference type="GO" id="GO:0003723">
    <property type="term" value="F:RNA binding"/>
    <property type="evidence" value="ECO:0007669"/>
    <property type="project" value="UniProtKB-UniRule"/>
</dbReference>
<dbReference type="GO" id="GO:0006355">
    <property type="term" value="P:regulation of DNA-templated transcription"/>
    <property type="evidence" value="ECO:0007669"/>
    <property type="project" value="InterPro"/>
</dbReference>
<dbReference type="GO" id="GO:0043487">
    <property type="term" value="P:regulation of RNA stability"/>
    <property type="evidence" value="ECO:0007669"/>
    <property type="project" value="TreeGrafter"/>
</dbReference>
<dbReference type="GO" id="GO:0045974">
    <property type="term" value="P:regulation of translation, ncRNA-mediated"/>
    <property type="evidence" value="ECO:0007669"/>
    <property type="project" value="TreeGrafter"/>
</dbReference>
<dbReference type="CDD" id="cd01716">
    <property type="entry name" value="Hfq"/>
    <property type="match status" value="1"/>
</dbReference>
<dbReference type="Gene3D" id="2.30.30.100">
    <property type="match status" value="1"/>
</dbReference>
<dbReference type="HAMAP" id="MF_00436">
    <property type="entry name" value="Hfq"/>
    <property type="match status" value="1"/>
</dbReference>
<dbReference type="InterPro" id="IPR005001">
    <property type="entry name" value="Hfq"/>
</dbReference>
<dbReference type="InterPro" id="IPR010920">
    <property type="entry name" value="LSM_dom_sf"/>
</dbReference>
<dbReference type="InterPro" id="IPR047575">
    <property type="entry name" value="Sm"/>
</dbReference>
<dbReference type="NCBIfam" id="TIGR02383">
    <property type="entry name" value="Hfq"/>
    <property type="match status" value="1"/>
</dbReference>
<dbReference type="NCBIfam" id="NF001602">
    <property type="entry name" value="PRK00395.1"/>
    <property type="match status" value="1"/>
</dbReference>
<dbReference type="PANTHER" id="PTHR34772">
    <property type="entry name" value="RNA-BINDING PROTEIN HFQ"/>
    <property type="match status" value="1"/>
</dbReference>
<dbReference type="PANTHER" id="PTHR34772:SF1">
    <property type="entry name" value="RNA-BINDING PROTEIN HFQ"/>
    <property type="match status" value="1"/>
</dbReference>
<dbReference type="Pfam" id="PF17209">
    <property type="entry name" value="Hfq"/>
    <property type="match status" value="1"/>
</dbReference>
<dbReference type="SUPFAM" id="SSF50182">
    <property type="entry name" value="Sm-like ribonucleoproteins"/>
    <property type="match status" value="1"/>
</dbReference>
<dbReference type="PROSITE" id="PS52002">
    <property type="entry name" value="SM"/>
    <property type="match status" value="1"/>
</dbReference>